<accession>A4SR17</accession>
<protein>
    <recommendedName>
        <fullName evidence="1">GTPase Obg</fullName>
        <ecNumber evidence="1">3.6.5.-</ecNumber>
    </recommendedName>
    <alternativeName>
        <fullName evidence="1">GTP-binding protein Obg</fullName>
    </alternativeName>
</protein>
<reference key="1">
    <citation type="journal article" date="2008" name="BMC Genomics">
        <title>The genome of Aeromonas salmonicida subsp. salmonicida A449: insights into the evolution of a fish pathogen.</title>
        <authorList>
            <person name="Reith M.E."/>
            <person name="Singh R.K."/>
            <person name="Curtis B."/>
            <person name="Boyd J.M."/>
            <person name="Bouevitch A."/>
            <person name="Kimball J."/>
            <person name="Munholland J."/>
            <person name="Murphy C."/>
            <person name="Sarty D."/>
            <person name="Williams J."/>
            <person name="Nash J.H."/>
            <person name="Johnson S.C."/>
            <person name="Brown L.L."/>
        </authorList>
    </citation>
    <scope>NUCLEOTIDE SEQUENCE [LARGE SCALE GENOMIC DNA]</scope>
    <source>
        <strain>A449</strain>
    </source>
</reference>
<feature type="chain" id="PRO_0000385677" description="GTPase Obg">
    <location>
        <begin position="1"/>
        <end position="400"/>
    </location>
</feature>
<feature type="domain" description="Obg" evidence="2">
    <location>
        <begin position="1"/>
        <end position="159"/>
    </location>
</feature>
<feature type="domain" description="OBG-type G" evidence="1">
    <location>
        <begin position="160"/>
        <end position="333"/>
    </location>
</feature>
<feature type="binding site" evidence="1">
    <location>
        <begin position="166"/>
        <end position="173"/>
    </location>
    <ligand>
        <name>GTP</name>
        <dbReference type="ChEBI" id="CHEBI:37565"/>
    </ligand>
</feature>
<feature type="binding site" evidence="1">
    <location>
        <position position="173"/>
    </location>
    <ligand>
        <name>Mg(2+)</name>
        <dbReference type="ChEBI" id="CHEBI:18420"/>
    </ligand>
</feature>
<feature type="binding site" evidence="1">
    <location>
        <begin position="191"/>
        <end position="195"/>
    </location>
    <ligand>
        <name>GTP</name>
        <dbReference type="ChEBI" id="CHEBI:37565"/>
    </ligand>
</feature>
<feature type="binding site" evidence="1">
    <location>
        <position position="193"/>
    </location>
    <ligand>
        <name>Mg(2+)</name>
        <dbReference type="ChEBI" id="CHEBI:18420"/>
    </ligand>
</feature>
<feature type="binding site" evidence="1">
    <location>
        <begin position="213"/>
        <end position="216"/>
    </location>
    <ligand>
        <name>GTP</name>
        <dbReference type="ChEBI" id="CHEBI:37565"/>
    </ligand>
</feature>
<feature type="binding site" evidence="1">
    <location>
        <begin position="283"/>
        <end position="286"/>
    </location>
    <ligand>
        <name>GTP</name>
        <dbReference type="ChEBI" id="CHEBI:37565"/>
    </ligand>
</feature>
<feature type="binding site" evidence="1">
    <location>
        <begin position="314"/>
        <end position="316"/>
    </location>
    <ligand>
        <name>GTP</name>
        <dbReference type="ChEBI" id="CHEBI:37565"/>
    </ligand>
</feature>
<keyword id="KW-0963">Cytoplasm</keyword>
<keyword id="KW-0342">GTP-binding</keyword>
<keyword id="KW-0378">Hydrolase</keyword>
<keyword id="KW-0460">Magnesium</keyword>
<keyword id="KW-0479">Metal-binding</keyword>
<keyword id="KW-0547">Nucleotide-binding</keyword>
<comment type="function">
    <text evidence="1">An essential GTPase which binds GTP, GDP and possibly (p)ppGpp with moderate affinity, with high nucleotide exchange rates and a fairly low GTP hydrolysis rate. Plays a role in control of the cell cycle, stress response, ribosome biogenesis and in those bacteria that undergo differentiation, in morphogenesis control.</text>
</comment>
<comment type="cofactor">
    <cofactor evidence="1">
        <name>Mg(2+)</name>
        <dbReference type="ChEBI" id="CHEBI:18420"/>
    </cofactor>
</comment>
<comment type="subunit">
    <text evidence="1">Monomer.</text>
</comment>
<comment type="subcellular location">
    <subcellularLocation>
        <location evidence="1">Cytoplasm</location>
    </subcellularLocation>
</comment>
<comment type="similarity">
    <text evidence="1">Belongs to the TRAFAC class OBG-HflX-like GTPase superfamily. OBG GTPase family.</text>
</comment>
<gene>
    <name evidence="1" type="primary">obg</name>
    <name type="ordered locus">ASA_3361</name>
</gene>
<organism>
    <name type="scientific">Aeromonas salmonicida (strain A449)</name>
    <dbReference type="NCBI Taxonomy" id="382245"/>
    <lineage>
        <taxon>Bacteria</taxon>
        <taxon>Pseudomonadati</taxon>
        <taxon>Pseudomonadota</taxon>
        <taxon>Gammaproteobacteria</taxon>
        <taxon>Aeromonadales</taxon>
        <taxon>Aeromonadaceae</taxon>
        <taxon>Aeromonas</taxon>
    </lineage>
</organism>
<dbReference type="EC" id="3.6.5.-" evidence="1"/>
<dbReference type="EMBL" id="CP000644">
    <property type="protein sequence ID" value="ABO91339.1"/>
    <property type="molecule type" value="Genomic_DNA"/>
</dbReference>
<dbReference type="SMR" id="A4SR17"/>
<dbReference type="STRING" id="29491.GCA_000820065_03752"/>
<dbReference type="KEGG" id="asa:ASA_3361"/>
<dbReference type="eggNOG" id="COG0536">
    <property type="taxonomic scope" value="Bacteria"/>
</dbReference>
<dbReference type="HOGENOM" id="CLU_011747_2_0_6"/>
<dbReference type="Proteomes" id="UP000000225">
    <property type="component" value="Chromosome"/>
</dbReference>
<dbReference type="GO" id="GO:0005737">
    <property type="term" value="C:cytoplasm"/>
    <property type="evidence" value="ECO:0007669"/>
    <property type="project" value="UniProtKB-SubCell"/>
</dbReference>
<dbReference type="GO" id="GO:0005525">
    <property type="term" value="F:GTP binding"/>
    <property type="evidence" value="ECO:0007669"/>
    <property type="project" value="UniProtKB-UniRule"/>
</dbReference>
<dbReference type="GO" id="GO:0003924">
    <property type="term" value="F:GTPase activity"/>
    <property type="evidence" value="ECO:0007669"/>
    <property type="project" value="UniProtKB-UniRule"/>
</dbReference>
<dbReference type="GO" id="GO:0000287">
    <property type="term" value="F:magnesium ion binding"/>
    <property type="evidence" value="ECO:0007669"/>
    <property type="project" value="InterPro"/>
</dbReference>
<dbReference type="GO" id="GO:0042254">
    <property type="term" value="P:ribosome biogenesis"/>
    <property type="evidence" value="ECO:0007669"/>
    <property type="project" value="UniProtKB-UniRule"/>
</dbReference>
<dbReference type="CDD" id="cd01898">
    <property type="entry name" value="Obg"/>
    <property type="match status" value="1"/>
</dbReference>
<dbReference type="FunFam" id="2.70.210.12:FF:000001">
    <property type="entry name" value="GTPase Obg"/>
    <property type="match status" value="1"/>
</dbReference>
<dbReference type="Gene3D" id="2.70.210.12">
    <property type="entry name" value="GTP1/OBG domain"/>
    <property type="match status" value="1"/>
</dbReference>
<dbReference type="Gene3D" id="3.40.50.300">
    <property type="entry name" value="P-loop containing nucleotide triphosphate hydrolases"/>
    <property type="match status" value="1"/>
</dbReference>
<dbReference type="HAMAP" id="MF_01454">
    <property type="entry name" value="GTPase_Obg"/>
    <property type="match status" value="1"/>
</dbReference>
<dbReference type="InterPro" id="IPR031167">
    <property type="entry name" value="G_OBG"/>
</dbReference>
<dbReference type="InterPro" id="IPR006073">
    <property type="entry name" value="GTP-bd"/>
</dbReference>
<dbReference type="InterPro" id="IPR014100">
    <property type="entry name" value="GTP-bd_Obg/CgtA"/>
</dbReference>
<dbReference type="InterPro" id="IPR006074">
    <property type="entry name" value="GTP1-OBG_CS"/>
</dbReference>
<dbReference type="InterPro" id="IPR006169">
    <property type="entry name" value="GTP1_OBG_dom"/>
</dbReference>
<dbReference type="InterPro" id="IPR036726">
    <property type="entry name" value="GTP1_OBG_dom_sf"/>
</dbReference>
<dbReference type="InterPro" id="IPR045086">
    <property type="entry name" value="OBG_GTPase"/>
</dbReference>
<dbReference type="InterPro" id="IPR027417">
    <property type="entry name" value="P-loop_NTPase"/>
</dbReference>
<dbReference type="NCBIfam" id="TIGR02729">
    <property type="entry name" value="Obg_CgtA"/>
    <property type="match status" value="1"/>
</dbReference>
<dbReference type="NCBIfam" id="NF008955">
    <property type="entry name" value="PRK12297.1"/>
    <property type="match status" value="1"/>
</dbReference>
<dbReference type="NCBIfam" id="NF008956">
    <property type="entry name" value="PRK12299.1"/>
    <property type="match status" value="1"/>
</dbReference>
<dbReference type="PANTHER" id="PTHR11702">
    <property type="entry name" value="DEVELOPMENTALLY REGULATED GTP-BINDING PROTEIN-RELATED"/>
    <property type="match status" value="1"/>
</dbReference>
<dbReference type="PANTHER" id="PTHR11702:SF31">
    <property type="entry name" value="MITOCHONDRIAL RIBOSOME-ASSOCIATED GTPASE 2"/>
    <property type="match status" value="1"/>
</dbReference>
<dbReference type="Pfam" id="PF01018">
    <property type="entry name" value="GTP1_OBG"/>
    <property type="match status" value="1"/>
</dbReference>
<dbReference type="Pfam" id="PF01926">
    <property type="entry name" value="MMR_HSR1"/>
    <property type="match status" value="1"/>
</dbReference>
<dbReference type="PIRSF" id="PIRSF002401">
    <property type="entry name" value="GTP_bd_Obg/CgtA"/>
    <property type="match status" value="1"/>
</dbReference>
<dbReference type="PRINTS" id="PR00326">
    <property type="entry name" value="GTP1OBG"/>
</dbReference>
<dbReference type="SUPFAM" id="SSF82051">
    <property type="entry name" value="Obg GTP-binding protein N-terminal domain"/>
    <property type="match status" value="1"/>
</dbReference>
<dbReference type="SUPFAM" id="SSF52540">
    <property type="entry name" value="P-loop containing nucleoside triphosphate hydrolases"/>
    <property type="match status" value="1"/>
</dbReference>
<dbReference type="PROSITE" id="PS51710">
    <property type="entry name" value="G_OBG"/>
    <property type="match status" value="1"/>
</dbReference>
<dbReference type="PROSITE" id="PS00905">
    <property type="entry name" value="GTP1_OBG"/>
    <property type="match status" value="1"/>
</dbReference>
<dbReference type="PROSITE" id="PS51883">
    <property type="entry name" value="OBG"/>
    <property type="match status" value="1"/>
</dbReference>
<sequence>MKFVDEVQIRVDAGDGGNGCVSFRREKYIPNGGPDGGDGGDGGDVYLIADENLNTLIDYRFERFHAAERGENGQSANCTGRRGKDRILRVPVGTRASDEDTGELLGDLTHHGQKLLVAKGGFHGLGNTRFKSSVNRAPRQKSSGTPGEVRTLKLELLLLADVGMLGLPNAGKSTFIRAVSAARPKVADYPFTTLVPNLGVVRGENSRSFVIADIPGLIEGAAEGAGLGIRFLKHLERCRVLIHLVDICPVDDSDPAENAVTIVKELEKYSPELAGKPRWLVFNKMDLILEEEAVEVMERVKTALAYEGPVYQISAISKEGTKKVCYDILDLLDTMPRQLAEDARDAIEKVEFKWDDYHKNQLAQAEAEALAASMAFDEGLDEEDWDDDEDDGVEVIYVRD</sequence>
<proteinExistence type="inferred from homology"/>
<evidence type="ECO:0000255" key="1">
    <source>
        <dbReference type="HAMAP-Rule" id="MF_01454"/>
    </source>
</evidence>
<evidence type="ECO:0000255" key="2">
    <source>
        <dbReference type="PROSITE-ProRule" id="PRU01231"/>
    </source>
</evidence>
<name>OBG_AERS4</name>